<gene>
    <name evidence="1" type="primary">prfC</name>
    <name type="ordered locus">Sbal223_1135</name>
</gene>
<sequence length="526" mass="59234">MSGNKVEVDKRRTFAIISHPDAGKTTITEKVLLFGNALQKAGTVKGKKSGQHAKSDWMEMEKDRGISITTSVMQFPYGGALVNLLDTPGHEDFSEDTYRTLTAVDSCLMVIDSAKGVEERTIKLMEVTRLRDTPIVTFMNKLDRDIRDPIDLMDEVESVLNIACAPITWPIGSGKEFKGIYHILRDEVVLYQGGMGHTIQDRRVIKGINNPDLEKAIGSYAADLRDEMELVRGASHEFDHAAFLKGELTPVFFGTALGNFGVDHILDGIVEWAPKPLPRESDARVVMPEEEKFTGFVFKIQANMDPKHRDRVAFMRVCSGRYEQGMKMHHVRIGKDVNVSDALTFMAGDRERAEEAYPGDIIGLHNHGTIRIGDTFTQGEKFRFTGVPNFAPEMFRRIRLRDPLKQKQLLKGLVQLSEEGAVQVFRPIDTNDLIVGAVGVLQFEVVVGRLKSEYNVEAIYEGISVSTARWVYCKDERKLEEFRRKCSQNLALDGGDNLTYIAPTMVNLNLSMERYPDIEFAKTREH</sequence>
<dbReference type="EMBL" id="CP001252">
    <property type="protein sequence ID" value="ACK45650.1"/>
    <property type="molecule type" value="Genomic_DNA"/>
</dbReference>
<dbReference type="RefSeq" id="WP_012587035.1">
    <property type="nucleotide sequence ID" value="NC_011663.1"/>
</dbReference>
<dbReference type="SMR" id="B8E6N9"/>
<dbReference type="KEGG" id="sbp:Sbal223_1135"/>
<dbReference type="HOGENOM" id="CLU_002794_2_1_6"/>
<dbReference type="Proteomes" id="UP000002507">
    <property type="component" value="Chromosome"/>
</dbReference>
<dbReference type="GO" id="GO:0005829">
    <property type="term" value="C:cytosol"/>
    <property type="evidence" value="ECO:0007669"/>
    <property type="project" value="TreeGrafter"/>
</dbReference>
<dbReference type="GO" id="GO:0005525">
    <property type="term" value="F:GTP binding"/>
    <property type="evidence" value="ECO:0007669"/>
    <property type="project" value="UniProtKB-UniRule"/>
</dbReference>
<dbReference type="GO" id="GO:0003924">
    <property type="term" value="F:GTPase activity"/>
    <property type="evidence" value="ECO:0007669"/>
    <property type="project" value="InterPro"/>
</dbReference>
<dbReference type="GO" id="GO:0097216">
    <property type="term" value="F:guanosine tetraphosphate binding"/>
    <property type="evidence" value="ECO:0007669"/>
    <property type="project" value="UniProtKB-ARBA"/>
</dbReference>
<dbReference type="GO" id="GO:0016150">
    <property type="term" value="F:translation release factor activity, codon nonspecific"/>
    <property type="evidence" value="ECO:0007669"/>
    <property type="project" value="TreeGrafter"/>
</dbReference>
<dbReference type="GO" id="GO:0016149">
    <property type="term" value="F:translation release factor activity, codon specific"/>
    <property type="evidence" value="ECO:0007669"/>
    <property type="project" value="UniProtKB-UniRule"/>
</dbReference>
<dbReference type="GO" id="GO:0006449">
    <property type="term" value="P:regulation of translational termination"/>
    <property type="evidence" value="ECO:0007669"/>
    <property type="project" value="UniProtKB-UniRule"/>
</dbReference>
<dbReference type="CDD" id="cd04169">
    <property type="entry name" value="RF3"/>
    <property type="match status" value="1"/>
</dbReference>
<dbReference type="CDD" id="cd03689">
    <property type="entry name" value="RF3_II"/>
    <property type="match status" value="1"/>
</dbReference>
<dbReference type="CDD" id="cd16259">
    <property type="entry name" value="RF3_III"/>
    <property type="match status" value="1"/>
</dbReference>
<dbReference type="FunFam" id="2.40.30.10:FF:000040">
    <property type="entry name" value="Peptide chain release factor 3"/>
    <property type="match status" value="1"/>
</dbReference>
<dbReference type="FunFam" id="3.30.70.3280:FF:000001">
    <property type="entry name" value="Peptide chain release factor 3"/>
    <property type="match status" value="1"/>
</dbReference>
<dbReference type="FunFam" id="3.40.50.300:FF:000542">
    <property type="entry name" value="Peptide chain release factor 3"/>
    <property type="match status" value="1"/>
</dbReference>
<dbReference type="Gene3D" id="3.40.50.300">
    <property type="entry name" value="P-loop containing nucleotide triphosphate hydrolases"/>
    <property type="match status" value="2"/>
</dbReference>
<dbReference type="Gene3D" id="3.30.70.3280">
    <property type="entry name" value="Peptide chain release factor 3, domain III"/>
    <property type="match status" value="1"/>
</dbReference>
<dbReference type="HAMAP" id="MF_00072">
    <property type="entry name" value="Rel_fac_3"/>
    <property type="match status" value="1"/>
</dbReference>
<dbReference type="InterPro" id="IPR053905">
    <property type="entry name" value="EF-G-like_DII"/>
</dbReference>
<dbReference type="InterPro" id="IPR035647">
    <property type="entry name" value="EFG_III/V"/>
</dbReference>
<dbReference type="InterPro" id="IPR031157">
    <property type="entry name" value="G_TR_CS"/>
</dbReference>
<dbReference type="InterPro" id="IPR027417">
    <property type="entry name" value="P-loop_NTPase"/>
</dbReference>
<dbReference type="InterPro" id="IPR004548">
    <property type="entry name" value="PrfC"/>
</dbReference>
<dbReference type="InterPro" id="IPR032090">
    <property type="entry name" value="RF3_C"/>
</dbReference>
<dbReference type="InterPro" id="IPR038467">
    <property type="entry name" value="RF3_dom_3_sf"/>
</dbReference>
<dbReference type="InterPro" id="IPR041732">
    <property type="entry name" value="RF3_GTP-bd"/>
</dbReference>
<dbReference type="InterPro" id="IPR005225">
    <property type="entry name" value="Small_GTP-bd"/>
</dbReference>
<dbReference type="InterPro" id="IPR000795">
    <property type="entry name" value="T_Tr_GTP-bd_dom"/>
</dbReference>
<dbReference type="InterPro" id="IPR009000">
    <property type="entry name" value="Transl_B-barrel_sf"/>
</dbReference>
<dbReference type="NCBIfam" id="TIGR00503">
    <property type="entry name" value="prfC"/>
    <property type="match status" value="1"/>
</dbReference>
<dbReference type="NCBIfam" id="NF001964">
    <property type="entry name" value="PRK00741.1"/>
    <property type="match status" value="1"/>
</dbReference>
<dbReference type="NCBIfam" id="TIGR00231">
    <property type="entry name" value="small_GTP"/>
    <property type="match status" value="1"/>
</dbReference>
<dbReference type="PANTHER" id="PTHR43556">
    <property type="entry name" value="PEPTIDE CHAIN RELEASE FACTOR RF3"/>
    <property type="match status" value="1"/>
</dbReference>
<dbReference type="PANTHER" id="PTHR43556:SF2">
    <property type="entry name" value="PEPTIDE CHAIN RELEASE FACTOR RF3"/>
    <property type="match status" value="1"/>
</dbReference>
<dbReference type="Pfam" id="PF22042">
    <property type="entry name" value="EF-G_D2"/>
    <property type="match status" value="1"/>
</dbReference>
<dbReference type="Pfam" id="PF00009">
    <property type="entry name" value="GTP_EFTU"/>
    <property type="match status" value="1"/>
</dbReference>
<dbReference type="Pfam" id="PF16658">
    <property type="entry name" value="RF3_C"/>
    <property type="match status" value="1"/>
</dbReference>
<dbReference type="PRINTS" id="PR00315">
    <property type="entry name" value="ELONGATNFCT"/>
</dbReference>
<dbReference type="SUPFAM" id="SSF54980">
    <property type="entry name" value="EF-G C-terminal domain-like"/>
    <property type="match status" value="1"/>
</dbReference>
<dbReference type="SUPFAM" id="SSF52540">
    <property type="entry name" value="P-loop containing nucleoside triphosphate hydrolases"/>
    <property type="match status" value="1"/>
</dbReference>
<dbReference type="SUPFAM" id="SSF50447">
    <property type="entry name" value="Translation proteins"/>
    <property type="match status" value="1"/>
</dbReference>
<dbReference type="PROSITE" id="PS00301">
    <property type="entry name" value="G_TR_1"/>
    <property type="match status" value="1"/>
</dbReference>
<dbReference type="PROSITE" id="PS51722">
    <property type="entry name" value="G_TR_2"/>
    <property type="match status" value="1"/>
</dbReference>
<proteinExistence type="inferred from homology"/>
<name>RF3_SHEB2</name>
<accession>B8E6N9</accession>
<organism>
    <name type="scientific">Shewanella baltica (strain OS223)</name>
    <dbReference type="NCBI Taxonomy" id="407976"/>
    <lineage>
        <taxon>Bacteria</taxon>
        <taxon>Pseudomonadati</taxon>
        <taxon>Pseudomonadota</taxon>
        <taxon>Gammaproteobacteria</taxon>
        <taxon>Alteromonadales</taxon>
        <taxon>Shewanellaceae</taxon>
        <taxon>Shewanella</taxon>
    </lineage>
</organism>
<keyword id="KW-0963">Cytoplasm</keyword>
<keyword id="KW-0342">GTP-binding</keyword>
<keyword id="KW-0547">Nucleotide-binding</keyword>
<keyword id="KW-0648">Protein biosynthesis</keyword>
<protein>
    <recommendedName>
        <fullName evidence="1">Peptide chain release factor 3</fullName>
        <shortName evidence="1">RF-3</shortName>
    </recommendedName>
</protein>
<evidence type="ECO:0000255" key="1">
    <source>
        <dbReference type="HAMAP-Rule" id="MF_00072"/>
    </source>
</evidence>
<feature type="chain" id="PRO_1000193534" description="Peptide chain release factor 3">
    <location>
        <begin position="1"/>
        <end position="526"/>
    </location>
</feature>
<feature type="domain" description="tr-type G">
    <location>
        <begin position="9"/>
        <end position="277"/>
    </location>
</feature>
<feature type="binding site" evidence="1">
    <location>
        <begin position="18"/>
        <end position="25"/>
    </location>
    <ligand>
        <name>GTP</name>
        <dbReference type="ChEBI" id="CHEBI:37565"/>
    </ligand>
</feature>
<feature type="binding site" evidence="1">
    <location>
        <begin position="86"/>
        <end position="90"/>
    </location>
    <ligand>
        <name>GTP</name>
        <dbReference type="ChEBI" id="CHEBI:37565"/>
    </ligand>
</feature>
<feature type="binding site" evidence="1">
    <location>
        <begin position="140"/>
        <end position="143"/>
    </location>
    <ligand>
        <name>GTP</name>
        <dbReference type="ChEBI" id="CHEBI:37565"/>
    </ligand>
</feature>
<comment type="function">
    <text evidence="1">Increases the formation of ribosomal termination complexes and stimulates activities of RF-1 and RF-2. It binds guanine nucleotides and has strong preference for UGA stop codons. It may interact directly with the ribosome. The stimulation of RF-1 and RF-2 is significantly reduced by GTP and GDP, but not by GMP.</text>
</comment>
<comment type="subcellular location">
    <subcellularLocation>
        <location evidence="1">Cytoplasm</location>
    </subcellularLocation>
</comment>
<comment type="similarity">
    <text evidence="1">Belongs to the TRAFAC class translation factor GTPase superfamily. Classic translation factor GTPase family. PrfC subfamily.</text>
</comment>
<reference key="1">
    <citation type="submission" date="2008-12" db="EMBL/GenBank/DDBJ databases">
        <title>Complete sequence of chromosome of Shewanella baltica OS223.</title>
        <authorList>
            <consortium name="US DOE Joint Genome Institute"/>
            <person name="Lucas S."/>
            <person name="Copeland A."/>
            <person name="Lapidus A."/>
            <person name="Glavina del Rio T."/>
            <person name="Dalin E."/>
            <person name="Tice H."/>
            <person name="Bruce D."/>
            <person name="Goodwin L."/>
            <person name="Pitluck S."/>
            <person name="Chertkov O."/>
            <person name="Meincke L."/>
            <person name="Brettin T."/>
            <person name="Detter J.C."/>
            <person name="Han C."/>
            <person name="Kuske C.R."/>
            <person name="Larimer F."/>
            <person name="Land M."/>
            <person name="Hauser L."/>
            <person name="Kyrpides N."/>
            <person name="Ovchinnikova G."/>
            <person name="Brettar I."/>
            <person name="Rodrigues J."/>
            <person name="Konstantinidis K."/>
            <person name="Tiedje J."/>
        </authorList>
    </citation>
    <scope>NUCLEOTIDE SEQUENCE [LARGE SCALE GENOMIC DNA]</scope>
    <source>
        <strain>OS223</strain>
    </source>
</reference>